<accession>E1AWD6</accession>
<dbReference type="EMBL" id="HQ009832">
    <property type="protein sequence ID" value="ADM34208.1"/>
    <property type="molecule type" value="mRNA"/>
</dbReference>
<dbReference type="SMR" id="E1AWD6"/>
<dbReference type="GO" id="GO:0005576">
    <property type="term" value="C:extracellular region"/>
    <property type="evidence" value="ECO:0007669"/>
    <property type="project" value="UniProtKB-SubCell"/>
</dbReference>
<dbReference type="GO" id="GO:0042742">
    <property type="term" value="P:defense response to bacterium"/>
    <property type="evidence" value="ECO:0007669"/>
    <property type="project" value="UniProtKB-KW"/>
</dbReference>
<dbReference type="GO" id="GO:0050832">
    <property type="term" value="P:defense response to fungus"/>
    <property type="evidence" value="ECO:0007669"/>
    <property type="project" value="UniProtKB-KW"/>
</dbReference>
<dbReference type="GO" id="GO:0031640">
    <property type="term" value="P:killing of cells of another organism"/>
    <property type="evidence" value="ECO:0007669"/>
    <property type="project" value="UniProtKB-KW"/>
</dbReference>
<dbReference type="InterPro" id="IPR012521">
    <property type="entry name" value="Antimicrobial_frog_2"/>
</dbReference>
<dbReference type="InterPro" id="IPR004275">
    <property type="entry name" value="Frog_antimicrobial_propeptide"/>
</dbReference>
<dbReference type="Pfam" id="PF08023">
    <property type="entry name" value="Antimicrobial_2"/>
    <property type="match status" value="1"/>
</dbReference>
<dbReference type="Pfam" id="PF03032">
    <property type="entry name" value="FSAP_sig_propep"/>
    <property type="match status" value="1"/>
</dbReference>
<feature type="signal peptide" evidence="2">
    <location>
        <begin position="1"/>
        <end position="22"/>
    </location>
</feature>
<feature type="propeptide" id="PRO_0000439734" description="Removed in mature form" evidence="5">
    <location>
        <begin position="23"/>
        <end position="39"/>
    </location>
</feature>
<feature type="peptide" id="PRO_0000439735" description="Brevinin-2CG1" evidence="3">
    <location>
        <begin position="42"/>
        <end position="74"/>
    </location>
</feature>
<feature type="disulfide bond" evidence="1">
    <location>
        <begin position="68"/>
        <end position="74"/>
    </location>
</feature>
<keyword id="KW-0878">Amphibian defense peptide</keyword>
<keyword id="KW-0044">Antibiotic</keyword>
<keyword id="KW-0929">Antimicrobial</keyword>
<keyword id="KW-0165">Cleavage on pair of basic residues</keyword>
<keyword id="KW-0204">Cytolysis</keyword>
<keyword id="KW-0903">Direct protein sequencing</keyword>
<keyword id="KW-1015">Disulfide bond</keyword>
<keyword id="KW-0295">Fungicide</keyword>
<keyword id="KW-0354">Hemolysis</keyword>
<keyword id="KW-0964">Secreted</keyword>
<keyword id="KW-0732">Signal</keyword>
<sequence length="74" mass="8165">MFTMKKSMLVLFFLGTISLSLCEEERNADEDDGEMTEEVKRGILDKLKEFGISAARGVAQSLLNTASCKLAKTC</sequence>
<reference evidence="6" key="1">
    <citation type="journal article" date="2012" name="Peptides">
        <title>Characterization of diverse antimicrobial peptides in skin secretions of Chungan torrent frog Amolops chunganensis.</title>
        <authorList>
            <person name="Yang X."/>
            <person name="Xia J."/>
            <person name="Yu Z."/>
            <person name="Hu Y."/>
            <person name="Li F."/>
            <person name="Meng H."/>
            <person name="Yang S."/>
            <person name="Liu J."/>
            <person name="Wang H."/>
        </authorList>
    </citation>
    <scope>NUCLEOTIDE SEQUENCE [MRNA]</scope>
    <scope>PROTEIN SEQUENCE OF 42-74</scope>
    <scope>FUNCTION</scope>
    <scope>SYNTHESIS</scope>
    <scope>SUBCELLULAR LOCATION</scope>
    <scope>MASS SPECTROMETRY</scope>
    <source>
        <tissue evidence="4">Skin secretion</tissue>
    </source>
</reference>
<name>BR21_AMOCU</name>
<proteinExistence type="evidence at protein level"/>
<comment type="function">
    <text evidence="3">Antimicrobial peptide active against a variety of Gram-positive and some Gram-negative bacterial strains. Has antifungal activity against a slime mold isolate. Has hemolytic activity against human erythrocytes.</text>
</comment>
<comment type="subcellular location">
    <subcellularLocation>
        <location evidence="2 3">Secreted</location>
    </subcellularLocation>
</comment>
<comment type="tissue specificity">
    <text evidence="5">Expressed by the skin glands.</text>
</comment>
<comment type="mass spectrometry" mass="3406.1" method="MALDI" evidence="3"/>
<comment type="similarity">
    <text evidence="2">Belongs to the frog skin active peptide (FSAP) family. Brevinin subfamily.</text>
</comment>
<evidence type="ECO:0000250" key="1">
    <source>
        <dbReference type="UniProtKB" id="P80398"/>
    </source>
</evidence>
<evidence type="ECO:0000255" key="2"/>
<evidence type="ECO:0000269" key="3">
    <source>
    </source>
</evidence>
<evidence type="ECO:0000303" key="4">
    <source>
    </source>
</evidence>
<evidence type="ECO:0000305" key="5">
    <source>
    </source>
</evidence>
<evidence type="ECO:0000312" key="6">
    <source>
        <dbReference type="EMBL" id="ADM34208.1"/>
    </source>
</evidence>
<organism evidence="4">
    <name type="scientific">Amolops chunganensis</name>
    <name type="common">Chungan torrent frog</name>
    <name type="synonym">Hylorana chunganensis</name>
    <dbReference type="NCBI Taxonomy" id="325556"/>
    <lineage>
        <taxon>Eukaryota</taxon>
        <taxon>Metazoa</taxon>
        <taxon>Chordata</taxon>
        <taxon>Craniata</taxon>
        <taxon>Vertebrata</taxon>
        <taxon>Euteleostomi</taxon>
        <taxon>Amphibia</taxon>
        <taxon>Batrachia</taxon>
        <taxon>Anura</taxon>
        <taxon>Neobatrachia</taxon>
        <taxon>Ranoidea</taxon>
        <taxon>Ranidae</taxon>
        <taxon>Amolops</taxon>
    </lineage>
</organism>
<protein>
    <recommendedName>
        <fullName evidence="4">Brevinin-2CG1</fullName>
    </recommendedName>
</protein>